<organism>
    <name type="scientific">Escherichia coli O8 (strain IAI1)</name>
    <dbReference type="NCBI Taxonomy" id="585034"/>
    <lineage>
        <taxon>Bacteria</taxon>
        <taxon>Pseudomonadati</taxon>
        <taxon>Pseudomonadota</taxon>
        <taxon>Gammaproteobacteria</taxon>
        <taxon>Enterobacterales</taxon>
        <taxon>Enterobacteriaceae</taxon>
        <taxon>Escherichia</taxon>
    </lineage>
</organism>
<feature type="chain" id="PRO_1000120746" description="Small ribosomal subunit protein bS6">
    <location>
        <begin position="1"/>
        <end position="131"/>
    </location>
</feature>
<feature type="region of interest" description="Disordered" evidence="2">
    <location>
        <begin position="98"/>
        <end position="131"/>
    </location>
</feature>
<feature type="compositionally biased region" description="Basic and acidic residues" evidence="2">
    <location>
        <begin position="104"/>
        <end position="116"/>
    </location>
</feature>
<feature type="compositionally biased region" description="Acidic residues" evidence="2">
    <location>
        <begin position="120"/>
        <end position="131"/>
    </location>
</feature>
<feature type="modified residue" description="N6-acetyllysine" evidence="1">
    <location>
        <position position="93"/>
    </location>
</feature>
<comment type="function">
    <text evidence="1">Binds together with bS18 to 16S ribosomal RNA.</text>
</comment>
<comment type="similarity">
    <text evidence="1">Belongs to the bacterial ribosomal protein bS6 family.</text>
</comment>
<keyword id="KW-0007">Acetylation</keyword>
<keyword id="KW-0687">Ribonucleoprotein</keyword>
<keyword id="KW-0689">Ribosomal protein</keyword>
<keyword id="KW-0694">RNA-binding</keyword>
<keyword id="KW-0699">rRNA-binding</keyword>
<accession>B7M9G2</accession>
<proteinExistence type="inferred from homology"/>
<gene>
    <name evidence="1" type="primary">rpsF</name>
    <name type="ordered locus">ECIAI1_4433</name>
</gene>
<sequence>MRHYEIVFMVHPDQSEQVPGMIERYTAAITGAEGKIHRLEDWGRRQLAYPINKLHKAHYVLMNVEAPQEVIDELETTFRFNDAVIRSMVMRTKHAVTEASPMVKAKDERRERRDDFANETADDAEAGDSEE</sequence>
<evidence type="ECO:0000255" key="1">
    <source>
        <dbReference type="HAMAP-Rule" id="MF_00360"/>
    </source>
</evidence>
<evidence type="ECO:0000256" key="2">
    <source>
        <dbReference type="SAM" id="MobiDB-lite"/>
    </source>
</evidence>
<evidence type="ECO:0000305" key="3"/>
<dbReference type="EMBL" id="CU928160">
    <property type="protein sequence ID" value="CAR01175.1"/>
    <property type="molecule type" value="Genomic_DNA"/>
</dbReference>
<dbReference type="RefSeq" id="WP_001216676.1">
    <property type="nucleotide sequence ID" value="NC_011741.1"/>
</dbReference>
<dbReference type="SMR" id="B7M9G2"/>
<dbReference type="GeneID" id="93777623"/>
<dbReference type="KEGG" id="ecr:ECIAI1_4433"/>
<dbReference type="HOGENOM" id="CLU_113441_6_1_6"/>
<dbReference type="GO" id="GO:0022627">
    <property type="term" value="C:cytosolic small ribosomal subunit"/>
    <property type="evidence" value="ECO:0007669"/>
    <property type="project" value="TreeGrafter"/>
</dbReference>
<dbReference type="GO" id="GO:0070181">
    <property type="term" value="F:small ribosomal subunit rRNA binding"/>
    <property type="evidence" value="ECO:0007669"/>
    <property type="project" value="TreeGrafter"/>
</dbReference>
<dbReference type="GO" id="GO:0003735">
    <property type="term" value="F:structural constituent of ribosome"/>
    <property type="evidence" value="ECO:0007669"/>
    <property type="project" value="InterPro"/>
</dbReference>
<dbReference type="GO" id="GO:0006412">
    <property type="term" value="P:translation"/>
    <property type="evidence" value="ECO:0007669"/>
    <property type="project" value="UniProtKB-UniRule"/>
</dbReference>
<dbReference type="CDD" id="cd00473">
    <property type="entry name" value="bS6"/>
    <property type="match status" value="1"/>
</dbReference>
<dbReference type="FunFam" id="3.30.70.60:FF:000003">
    <property type="entry name" value="30S ribosomal protein S6"/>
    <property type="match status" value="1"/>
</dbReference>
<dbReference type="Gene3D" id="3.30.70.60">
    <property type="match status" value="1"/>
</dbReference>
<dbReference type="HAMAP" id="MF_00360">
    <property type="entry name" value="Ribosomal_bS6"/>
    <property type="match status" value="1"/>
</dbReference>
<dbReference type="InterPro" id="IPR000529">
    <property type="entry name" value="Ribosomal_bS6"/>
</dbReference>
<dbReference type="InterPro" id="IPR020815">
    <property type="entry name" value="Ribosomal_bS6_CS"/>
</dbReference>
<dbReference type="InterPro" id="IPR035980">
    <property type="entry name" value="Ribosomal_bS6_sf"/>
</dbReference>
<dbReference type="InterPro" id="IPR020814">
    <property type="entry name" value="Ribosomal_S6_plastid/chlpt"/>
</dbReference>
<dbReference type="InterPro" id="IPR014717">
    <property type="entry name" value="Transl_elong_EF1B/ribsomal_bS6"/>
</dbReference>
<dbReference type="NCBIfam" id="TIGR00166">
    <property type="entry name" value="S6"/>
    <property type="match status" value="1"/>
</dbReference>
<dbReference type="PANTHER" id="PTHR21011">
    <property type="entry name" value="MITOCHONDRIAL 28S RIBOSOMAL PROTEIN S6"/>
    <property type="match status" value="1"/>
</dbReference>
<dbReference type="PANTHER" id="PTHR21011:SF1">
    <property type="entry name" value="SMALL RIBOSOMAL SUBUNIT PROTEIN BS6M"/>
    <property type="match status" value="1"/>
</dbReference>
<dbReference type="Pfam" id="PF01250">
    <property type="entry name" value="Ribosomal_S6"/>
    <property type="match status" value="1"/>
</dbReference>
<dbReference type="SUPFAM" id="SSF54995">
    <property type="entry name" value="Ribosomal protein S6"/>
    <property type="match status" value="1"/>
</dbReference>
<dbReference type="PROSITE" id="PS01048">
    <property type="entry name" value="RIBOSOMAL_S6"/>
    <property type="match status" value="1"/>
</dbReference>
<reference key="1">
    <citation type="journal article" date="2009" name="PLoS Genet.">
        <title>Organised genome dynamics in the Escherichia coli species results in highly diverse adaptive paths.</title>
        <authorList>
            <person name="Touchon M."/>
            <person name="Hoede C."/>
            <person name="Tenaillon O."/>
            <person name="Barbe V."/>
            <person name="Baeriswyl S."/>
            <person name="Bidet P."/>
            <person name="Bingen E."/>
            <person name="Bonacorsi S."/>
            <person name="Bouchier C."/>
            <person name="Bouvet O."/>
            <person name="Calteau A."/>
            <person name="Chiapello H."/>
            <person name="Clermont O."/>
            <person name="Cruveiller S."/>
            <person name="Danchin A."/>
            <person name="Diard M."/>
            <person name="Dossat C."/>
            <person name="Karoui M.E."/>
            <person name="Frapy E."/>
            <person name="Garry L."/>
            <person name="Ghigo J.M."/>
            <person name="Gilles A.M."/>
            <person name="Johnson J."/>
            <person name="Le Bouguenec C."/>
            <person name="Lescat M."/>
            <person name="Mangenot S."/>
            <person name="Martinez-Jehanne V."/>
            <person name="Matic I."/>
            <person name="Nassif X."/>
            <person name="Oztas S."/>
            <person name="Petit M.A."/>
            <person name="Pichon C."/>
            <person name="Rouy Z."/>
            <person name="Ruf C.S."/>
            <person name="Schneider D."/>
            <person name="Tourret J."/>
            <person name="Vacherie B."/>
            <person name="Vallenet D."/>
            <person name="Medigue C."/>
            <person name="Rocha E.P.C."/>
            <person name="Denamur E."/>
        </authorList>
    </citation>
    <scope>NUCLEOTIDE SEQUENCE [LARGE SCALE GENOMIC DNA]</scope>
    <source>
        <strain>IAI1</strain>
    </source>
</reference>
<name>RS6_ECO8A</name>
<protein>
    <recommendedName>
        <fullName evidence="1">Small ribosomal subunit protein bS6</fullName>
    </recommendedName>
    <alternativeName>
        <fullName evidence="3">30S ribosomal protein S6</fullName>
    </alternativeName>
</protein>